<evidence type="ECO:0000250" key="1"/>
<evidence type="ECO:0000250" key="2">
    <source>
        <dbReference type="UniProtKB" id="Q06587"/>
    </source>
</evidence>
<evidence type="ECO:0000255" key="3"/>
<evidence type="ECO:0000255" key="4">
    <source>
        <dbReference type="PROSITE-ProRule" id="PRU00175"/>
    </source>
</evidence>
<evidence type="ECO:0000256" key="5">
    <source>
        <dbReference type="SAM" id="MobiDB-lite"/>
    </source>
</evidence>
<evidence type="ECO:0000305" key="6"/>
<keyword id="KW-0156">Chromatin regulator</keyword>
<keyword id="KW-0479">Metal-binding</keyword>
<keyword id="KW-0539">Nucleus</keyword>
<keyword id="KW-0597">Phosphoprotein</keyword>
<keyword id="KW-1185">Reference proteome</keyword>
<keyword id="KW-0678">Repressor</keyword>
<keyword id="KW-0804">Transcription</keyword>
<keyword id="KW-0805">Transcription regulation</keyword>
<keyword id="KW-0808">Transferase</keyword>
<keyword id="KW-0833">Ubl conjugation pathway</keyword>
<keyword id="KW-0862">Zinc</keyword>
<keyword id="KW-0863">Zinc-finger</keyword>
<proteinExistence type="inferred from homology"/>
<reference key="1">
    <citation type="journal article" date="2003" name="Immunogenetics">
        <title>Comparative and evolutionary analysis of the rhesus macaque extended MHC class II region.</title>
        <authorList>
            <person name="Sudbrak R."/>
            <person name="Reinhardt R."/>
            <person name="Hennig S."/>
            <person name="Lehrach H."/>
            <person name="Gunther E."/>
            <person name="Walter L."/>
        </authorList>
    </citation>
    <scope>NUCLEOTIDE SEQUENCE [GENOMIC DNA]</scope>
</reference>
<protein>
    <recommendedName>
        <fullName>E3 ubiquitin-protein ligase RING1</fullName>
        <ecNumber>2.3.2.27</ecNumber>
    </recommendedName>
    <alternativeName>
        <fullName>Polycomb complex protein RING1</fullName>
    </alternativeName>
    <alternativeName>
        <fullName>RING finger protein 1</fullName>
    </alternativeName>
    <alternativeName>
        <fullName evidence="6">RING-type E3 ubiquitin transferase RING1</fullName>
    </alternativeName>
</protein>
<dbReference type="EC" id="2.3.2.27"/>
<dbReference type="EMBL" id="AJ421778">
    <property type="protein sequence ID" value="CAD18905.1"/>
    <property type="molecule type" value="Genomic_DNA"/>
</dbReference>
<dbReference type="RefSeq" id="NP_001108431.1">
    <property type="nucleotide sequence ID" value="NM_001114959.1"/>
</dbReference>
<dbReference type="SMR" id="Q8WMN5"/>
<dbReference type="STRING" id="9544.ENSMMUP00000005154"/>
<dbReference type="PaxDb" id="9544-ENSMMUP00000005154"/>
<dbReference type="GeneID" id="718137"/>
<dbReference type="KEGG" id="mcc:718137"/>
<dbReference type="CTD" id="6015"/>
<dbReference type="eggNOG" id="KOG0311">
    <property type="taxonomic scope" value="Eukaryota"/>
</dbReference>
<dbReference type="InParanoid" id="Q8WMN5"/>
<dbReference type="OrthoDB" id="337575at2759"/>
<dbReference type="UniPathway" id="UPA00143"/>
<dbReference type="Proteomes" id="UP000006718">
    <property type="component" value="Unassembled WGS sequence"/>
</dbReference>
<dbReference type="GO" id="GO:0016607">
    <property type="term" value="C:nuclear speck"/>
    <property type="evidence" value="ECO:0007669"/>
    <property type="project" value="UniProtKB-SubCell"/>
</dbReference>
<dbReference type="GO" id="GO:0031519">
    <property type="term" value="C:PcG protein complex"/>
    <property type="evidence" value="ECO:0000250"/>
    <property type="project" value="UniProtKB"/>
</dbReference>
<dbReference type="GO" id="GO:0035102">
    <property type="term" value="C:PRC1 complex"/>
    <property type="evidence" value="ECO:0000250"/>
    <property type="project" value="UniProtKB"/>
</dbReference>
<dbReference type="GO" id="GO:0000151">
    <property type="term" value="C:ubiquitin ligase complex"/>
    <property type="evidence" value="ECO:0000318"/>
    <property type="project" value="GO_Central"/>
</dbReference>
<dbReference type="GO" id="GO:0003682">
    <property type="term" value="F:chromatin binding"/>
    <property type="evidence" value="ECO:0000318"/>
    <property type="project" value="GO_Central"/>
</dbReference>
<dbReference type="GO" id="GO:0061630">
    <property type="term" value="F:ubiquitin protein ligase activity"/>
    <property type="evidence" value="ECO:0000318"/>
    <property type="project" value="GO_Central"/>
</dbReference>
<dbReference type="GO" id="GO:0008270">
    <property type="term" value="F:zinc ion binding"/>
    <property type="evidence" value="ECO:0007669"/>
    <property type="project" value="UniProtKB-KW"/>
</dbReference>
<dbReference type="GO" id="GO:0006325">
    <property type="term" value="P:chromatin organization"/>
    <property type="evidence" value="ECO:0007669"/>
    <property type="project" value="UniProtKB-KW"/>
</dbReference>
<dbReference type="GO" id="GO:0045892">
    <property type="term" value="P:negative regulation of DNA-templated transcription"/>
    <property type="evidence" value="ECO:0000318"/>
    <property type="project" value="GO_Central"/>
</dbReference>
<dbReference type="GO" id="GO:0016567">
    <property type="term" value="P:protein ubiquitination"/>
    <property type="evidence" value="ECO:0007669"/>
    <property type="project" value="UniProtKB-UniPathway"/>
</dbReference>
<dbReference type="CDD" id="cd17166">
    <property type="entry name" value="RAWUL_RING1"/>
    <property type="match status" value="1"/>
</dbReference>
<dbReference type="CDD" id="cd16740">
    <property type="entry name" value="RING-HC_RING2"/>
    <property type="match status" value="1"/>
</dbReference>
<dbReference type="FunFam" id="3.30.40.10:FF:000100">
    <property type="entry name" value="E3 ubiquitin-protein ligase RING2"/>
    <property type="match status" value="1"/>
</dbReference>
<dbReference type="Gene3D" id="3.10.20.90">
    <property type="entry name" value="Phosphatidylinositol 3-kinase Catalytic Subunit, Chain A, domain 1"/>
    <property type="match status" value="1"/>
</dbReference>
<dbReference type="Gene3D" id="3.30.40.10">
    <property type="entry name" value="Zinc/RING finger domain, C3HC4 (zinc finger)"/>
    <property type="match status" value="1"/>
</dbReference>
<dbReference type="InterPro" id="IPR032443">
    <property type="entry name" value="RAWUL"/>
</dbReference>
<dbReference type="InterPro" id="IPR043540">
    <property type="entry name" value="RING1/RING2"/>
</dbReference>
<dbReference type="InterPro" id="IPR001841">
    <property type="entry name" value="Znf_RING"/>
</dbReference>
<dbReference type="InterPro" id="IPR013083">
    <property type="entry name" value="Znf_RING/FYVE/PHD"/>
</dbReference>
<dbReference type="InterPro" id="IPR017907">
    <property type="entry name" value="Znf_RING_CS"/>
</dbReference>
<dbReference type="PANTHER" id="PTHR46076:SF2">
    <property type="entry name" value="E3 UBIQUITIN-PROTEIN LIGASE RING1"/>
    <property type="match status" value="1"/>
</dbReference>
<dbReference type="PANTHER" id="PTHR46076">
    <property type="entry name" value="E3 UBIQUITIN-PROTEIN LIGASE RING1 / RING 2 FAMILY MEMBER"/>
    <property type="match status" value="1"/>
</dbReference>
<dbReference type="Pfam" id="PF16207">
    <property type="entry name" value="RAWUL"/>
    <property type="match status" value="1"/>
</dbReference>
<dbReference type="Pfam" id="PF13923">
    <property type="entry name" value="zf-C3HC4_2"/>
    <property type="match status" value="1"/>
</dbReference>
<dbReference type="SMART" id="SM00184">
    <property type="entry name" value="RING"/>
    <property type="match status" value="1"/>
</dbReference>
<dbReference type="SUPFAM" id="SSF57850">
    <property type="entry name" value="RING/U-box"/>
    <property type="match status" value="1"/>
</dbReference>
<dbReference type="PROSITE" id="PS00518">
    <property type="entry name" value="ZF_RING_1"/>
    <property type="match status" value="1"/>
</dbReference>
<dbReference type="PROSITE" id="PS50089">
    <property type="entry name" value="ZF_RING_2"/>
    <property type="match status" value="1"/>
</dbReference>
<name>RING1_MACMU</name>
<gene>
    <name type="primary">RING1</name>
</gene>
<comment type="function">
    <text evidence="1">Constitutes one of the E3 ubiquitin-protein ligases that mediate monoubiquitination of 'Lys-119' of histone H2A, thereby playing a central role in histone code and gene regulation. H2A 'Lys-119' ubiquitination gives a specific tag for epigenetic transcriptional repression and participates in X chromosome inactivation of female mammals. Essential component of a Polycomb group (PcG) multiprotein PRC1-like complex, a complex class required to maintain the transcriptionally repressive state of many genes, including Hox genes, throughout development. PcG PRC1 complex acts via chromatin remodeling and modification of histones, rendering chromatin heritably changed in its expressibility. Compared to RNF2/RING2, it does not have the main E3 ubiquitin ligase activity on histone H2A, and it may rather act as a modulator of RNF2/RING2 activity (By similarity).</text>
</comment>
<comment type="catalytic activity">
    <reaction>
        <text>S-ubiquitinyl-[E2 ubiquitin-conjugating enzyme]-L-cysteine + [acceptor protein]-L-lysine = [E2 ubiquitin-conjugating enzyme]-L-cysteine + N(6)-ubiquitinyl-[acceptor protein]-L-lysine.</text>
        <dbReference type="EC" id="2.3.2.27"/>
    </reaction>
</comment>
<comment type="pathway">
    <text>Protein modification; protein ubiquitination.</text>
</comment>
<comment type="subunit">
    <text evidence="1 2">Component of chromatin-associated Polycomb (PcG) complexes. Part of the E2F6.com-1 complex in G0 phase composed of E2F6, MGA, MAX, TFDP1, CBX3, BAT8, EUHMTASE1, RING1, RNF2/RING2 MBLR, L3MBTL2 and YAF2. Interacts with CBX2 and PCGF6. Component of a PRC1-like complex. Component of repressive BCOR complex containing Polycomb group subcomplex at least composed of RYBP, PCGF1, BCOR and RNF2/RING2. Interacts with PHC2, PCGF2, RNF2; CBX6, CBX7 and CBX8. Interacts with BMI1 (By similarity). Interacts with MN1 (By similarity).</text>
</comment>
<comment type="subcellular location">
    <subcellularLocation>
        <location evidence="1">Nucleus speckle</location>
    </subcellularLocation>
</comment>
<organism>
    <name type="scientific">Macaca mulatta</name>
    <name type="common">Rhesus macaque</name>
    <dbReference type="NCBI Taxonomy" id="9544"/>
    <lineage>
        <taxon>Eukaryota</taxon>
        <taxon>Metazoa</taxon>
        <taxon>Chordata</taxon>
        <taxon>Craniata</taxon>
        <taxon>Vertebrata</taxon>
        <taxon>Euteleostomi</taxon>
        <taxon>Mammalia</taxon>
        <taxon>Eutheria</taxon>
        <taxon>Euarchontoglires</taxon>
        <taxon>Primates</taxon>
        <taxon>Haplorrhini</taxon>
        <taxon>Catarrhini</taxon>
        <taxon>Cercopithecidae</taxon>
        <taxon>Cercopithecinae</taxon>
        <taxon>Macaca</taxon>
    </lineage>
</organism>
<feature type="chain" id="PRO_0000056385" description="E3 ubiquitin-protein ligase RING1">
    <location>
        <begin position="1"/>
        <end position="377"/>
    </location>
</feature>
<feature type="zinc finger region" description="RING-type" evidence="4">
    <location>
        <begin position="19"/>
        <end position="59"/>
    </location>
</feature>
<feature type="region of interest" description="Necessary for transcriptional repression" evidence="1">
    <location>
        <begin position="1"/>
        <end position="205"/>
    </location>
</feature>
<feature type="region of interest" description="Disordered" evidence="5">
    <location>
        <begin position="119"/>
        <end position="234"/>
    </location>
</feature>
<feature type="region of interest" description="Necessary for interaction with CBX2" evidence="1">
    <location>
        <begin position="201"/>
        <end position="377"/>
    </location>
</feature>
<feature type="region of interest" description="Disordered" evidence="5">
    <location>
        <begin position="280"/>
        <end position="325"/>
    </location>
</feature>
<feature type="short sequence motif" description="Nuclear localization signal" evidence="3">
    <location>
        <begin position="172"/>
        <end position="175"/>
    </location>
</feature>
<feature type="compositionally biased region" description="Acidic residues" evidence="5">
    <location>
        <begin position="146"/>
        <end position="158"/>
    </location>
</feature>
<feature type="compositionally biased region" description="Gly residues" evidence="5">
    <location>
        <begin position="176"/>
        <end position="199"/>
    </location>
</feature>
<feature type="compositionally biased region" description="Gly residues" evidence="5">
    <location>
        <begin position="206"/>
        <end position="215"/>
    </location>
</feature>
<feature type="compositionally biased region" description="Pro residues" evidence="5">
    <location>
        <begin position="217"/>
        <end position="229"/>
    </location>
</feature>
<feature type="compositionally biased region" description="Gly residues" evidence="5">
    <location>
        <begin position="286"/>
        <end position="314"/>
    </location>
</feature>
<feature type="modified residue" description="Phosphoserine" evidence="2">
    <location>
        <position position="9"/>
    </location>
</feature>
<feature type="modified residue" description="Phosphoserine" evidence="2">
    <location>
        <position position="111"/>
    </location>
</feature>
<feature type="modified residue" description="Phosphoserine" evidence="2">
    <location>
        <position position="158"/>
    </location>
</feature>
<feature type="modified residue" description="Phosphoserine" evidence="2">
    <location>
        <position position="161"/>
    </location>
</feature>
<feature type="modified residue" description="Phosphothreonine" evidence="2">
    <location>
        <position position="186"/>
    </location>
</feature>
<feature type="modified residue" description="Phosphothreonine" evidence="2">
    <location>
        <position position="191"/>
    </location>
</feature>
<feature type="modified residue" description="Phosphoserine" evidence="2">
    <location>
        <position position="200"/>
    </location>
</feature>
<feature type="modified residue" description="Phosphoserine" evidence="2">
    <location>
        <position position="203"/>
    </location>
</feature>
<feature type="modified residue" description="Phosphoserine" evidence="2">
    <location>
        <position position="219"/>
    </location>
</feature>
<feature type="modified residue" description="Phosphoserine" evidence="2">
    <location>
        <position position="225"/>
    </location>
</feature>
<sequence length="377" mass="39100">MDGTEIAVSPRSLHSELMCPICLDMLKNTMTTKECLHRFCSDCIVTALRSGNKECPTCRKKLVSKRSLRPDPNFDALISKIYPSREEYEAHQDRVLIRLSRLHNQQALSSSIEEGLRMQAMHRAQRVRRPIPGSDQTTTMSGGEGEPGEGEGDGEDVSSDSAPDSAPGPAPKRPRGGGAGGSSVGTGGGGTGGVGGGAGSEDSGDRGGTLGGGTLGPPSPPGAPSPPEPGGEIELVFRPHPLLVEKGEYCQTRYVKTTGNATVDHLSKYLALRIALERRQQQEAGEPGGPGGGASDTGGPDGGGGEGGGAGGGDGPEEPALPSLEGVSEKQYTIYIAPGGGAFTTLNGSLTLELVNEKFWKVSRPLELCYAPTKDPK</sequence>
<accession>Q8WMN5</accession>